<name>PDXT_MYCLE</name>
<accession>Q9CCT5</accession>
<accession>Q49637</accession>
<feature type="chain" id="PRO_0000135647" description="Pyridoxal 5'-phosphate synthase subunit PdxT">
    <location>
        <begin position="1"/>
        <end position="198"/>
    </location>
</feature>
<feature type="active site" description="Nucleophile" evidence="1">
    <location>
        <position position="81"/>
    </location>
</feature>
<feature type="active site" description="Charge relay system" evidence="1">
    <location>
        <position position="177"/>
    </location>
</feature>
<feature type="active site" description="Charge relay system" evidence="1">
    <location>
        <position position="179"/>
    </location>
</feature>
<feature type="binding site" evidence="1">
    <location>
        <begin position="49"/>
        <end position="51"/>
    </location>
    <ligand>
        <name>L-glutamine</name>
        <dbReference type="ChEBI" id="CHEBI:58359"/>
    </ligand>
</feature>
<feature type="binding site" evidence="1">
    <location>
        <position position="113"/>
    </location>
    <ligand>
        <name>L-glutamine</name>
        <dbReference type="ChEBI" id="CHEBI:58359"/>
    </ligand>
</feature>
<feature type="binding site" evidence="1">
    <location>
        <begin position="141"/>
        <end position="142"/>
    </location>
    <ligand>
        <name>L-glutamine</name>
        <dbReference type="ChEBI" id="CHEBI:58359"/>
    </ligand>
</feature>
<gene>
    <name evidence="1" type="primary">pdxT</name>
    <name type="ordered locus">ML0474</name>
</gene>
<proteinExistence type="inferred from homology"/>
<dbReference type="EC" id="4.3.3.6" evidence="1"/>
<dbReference type="EC" id="3.5.1.2" evidence="1"/>
<dbReference type="EMBL" id="U00011">
    <property type="protein sequence ID" value="AAA17085.1"/>
    <property type="status" value="ALT_INIT"/>
    <property type="molecule type" value="Genomic_DNA"/>
</dbReference>
<dbReference type="EMBL" id="AL583918">
    <property type="protein sequence ID" value="CAC29982.1"/>
    <property type="status" value="ALT_INIT"/>
    <property type="molecule type" value="Genomic_DNA"/>
</dbReference>
<dbReference type="PIR" id="B86968">
    <property type="entry name" value="B86968"/>
</dbReference>
<dbReference type="PIR" id="S72721">
    <property type="entry name" value="S72721"/>
</dbReference>
<dbReference type="RefSeq" id="NP_301419.2">
    <property type="nucleotide sequence ID" value="NC_002677.1"/>
</dbReference>
<dbReference type="RefSeq" id="WP_010907743.1">
    <property type="nucleotide sequence ID" value="NC_002677.1"/>
</dbReference>
<dbReference type="SMR" id="Q9CCT5"/>
<dbReference type="STRING" id="272631.gene:17574295"/>
<dbReference type="MEROPS" id="C26.A32"/>
<dbReference type="KEGG" id="mle:ML0474"/>
<dbReference type="PATRIC" id="fig|272631.5.peg.835"/>
<dbReference type="Leproma" id="ML0474"/>
<dbReference type="eggNOG" id="COG0311">
    <property type="taxonomic scope" value="Bacteria"/>
</dbReference>
<dbReference type="HOGENOM" id="CLU_069674_2_0_11"/>
<dbReference type="OrthoDB" id="9810320at2"/>
<dbReference type="UniPathway" id="UPA00245"/>
<dbReference type="Proteomes" id="UP000000806">
    <property type="component" value="Chromosome"/>
</dbReference>
<dbReference type="GO" id="GO:0005829">
    <property type="term" value="C:cytosol"/>
    <property type="evidence" value="ECO:0007669"/>
    <property type="project" value="TreeGrafter"/>
</dbReference>
<dbReference type="GO" id="GO:1903600">
    <property type="term" value="C:glutaminase complex"/>
    <property type="evidence" value="ECO:0007669"/>
    <property type="project" value="TreeGrafter"/>
</dbReference>
<dbReference type="GO" id="GO:0004359">
    <property type="term" value="F:glutaminase activity"/>
    <property type="evidence" value="ECO:0007669"/>
    <property type="project" value="UniProtKB-UniRule"/>
</dbReference>
<dbReference type="GO" id="GO:0036381">
    <property type="term" value="F:pyridoxal 5'-phosphate synthase (glutamine hydrolysing) activity"/>
    <property type="evidence" value="ECO:0007669"/>
    <property type="project" value="UniProtKB-UniRule"/>
</dbReference>
<dbReference type="GO" id="GO:0006543">
    <property type="term" value="P:glutamine catabolic process"/>
    <property type="evidence" value="ECO:0007669"/>
    <property type="project" value="UniProtKB-UniRule"/>
</dbReference>
<dbReference type="GO" id="GO:0042823">
    <property type="term" value="P:pyridoxal phosphate biosynthetic process"/>
    <property type="evidence" value="ECO:0007669"/>
    <property type="project" value="UniProtKB-UniRule"/>
</dbReference>
<dbReference type="GO" id="GO:0008614">
    <property type="term" value="P:pyridoxine metabolic process"/>
    <property type="evidence" value="ECO:0007669"/>
    <property type="project" value="TreeGrafter"/>
</dbReference>
<dbReference type="CDD" id="cd01749">
    <property type="entry name" value="GATase1_PB"/>
    <property type="match status" value="1"/>
</dbReference>
<dbReference type="FunFam" id="3.40.50.880:FF:000010">
    <property type="entry name" value="uncharacterized protein LOC100176842 isoform X2"/>
    <property type="match status" value="1"/>
</dbReference>
<dbReference type="Gene3D" id="3.40.50.880">
    <property type="match status" value="1"/>
</dbReference>
<dbReference type="HAMAP" id="MF_01615">
    <property type="entry name" value="PdxT"/>
    <property type="match status" value="1"/>
</dbReference>
<dbReference type="InterPro" id="IPR029062">
    <property type="entry name" value="Class_I_gatase-like"/>
</dbReference>
<dbReference type="InterPro" id="IPR002161">
    <property type="entry name" value="PdxT/SNO"/>
</dbReference>
<dbReference type="InterPro" id="IPR021196">
    <property type="entry name" value="PdxT/SNO_CS"/>
</dbReference>
<dbReference type="NCBIfam" id="TIGR03800">
    <property type="entry name" value="PLP_synth_Pdx2"/>
    <property type="match status" value="1"/>
</dbReference>
<dbReference type="PANTHER" id="PTHR31559">
    <property type="entry name" value="PYRIDOXAL 5'-PHOSPHATE SYNTHASE SUBUNIT SNO"/>
    <property type="match status" value="1"/>
</dbReference>
<dbReference type="PANTHER" id="PTHR31559:SF0">
    <property type="entry name" value="PYRIDOXAL 5'-PHOSPHATE SYNTHASE SUBUNIT SNO1-RELATED"/>
    <property type="match status" value="1"/>
</dbReference>
<dbReference type="Pfam" id="PF01174">
    <property type="entry name" value="SNO"/>
    <property type="match status" value="1"/>
</dbReference>
<dbReference type="PIRSF" id="PIRSF005639">
    <property type="entry name" value="Glut_amidoT_SNO"/>
    <property type="match status" value="1"/>
</dbReference>
<dbReference type="SUPFAM" id="SSF52317">
    <property type="entry name" value="Class I glutamine amidotransferase-like"/>
    <property type="match status" value="1"/>
</dbReference>
<dbReference type="PROSITE" id="PS01236">
    <property type="entry name" value="PDXT_SNO_1"/>
    <property type="match status" value="1"/>
</dbReference>
<dbReference type="PROSITE" id="PS51130">
    <property type="entry name" value="PDXT_SNO_2"/>
    <property type="match status" value="1"/>
</dbReference>
<reference key="1">
    <citation type="submission" date="1994-03" db="EMBL/GenBank/DDBJ databases">
        <authorList>
            <person name="Robison K."/>
            <person name="Smith D.R."/>
        </authorList>
    </citation>
    <scope>NUCLEOTIDE SEQUENCE [GENOMIC DNA]</scope>
</reference>
<reference key="2">
    <citation type="journal article" date="2001" name="Nature">
        <title>Massive gene decay in the leprosy bacillus.</title>
        <authorList>
            <person name="Cole S.T."/>
            <person name="Eiglmeier K."/>
            <person name="Parkhill J."/>
            <person name="James K.D."/>
            <person name="Thomson N.R."/>
            <person name="Wheeler P.R."/>
            <person name="Honore N."/>
            <person name="Garnier T."/>
            <person name="Churcher C.M."/>
            <person name="Harris D.E."/>
            <person name="Mungall K.L."/>
            <person name="Basham D."/>
            <person name="Brown D."/>
            <person name="Chillingworth T."/>
            <person name="Connor R."/>
            <person name="Davies R.M."/>
            <person name="Devlin K."/>
            <person name="Duthoy S."/>
            <person name="Feltwell T."/>
            <person name="Fraser A."/>
            <person name="Hamlin N."/>
            <person name="Holroyd S."/>
            <person name="Hornsby T."/>
            <person name="Jagels K."/>
            <person name="Lacroix C."/>
            <person name="Maclean J."/>
            <person name="Moule S."/>
            <person name="Murphy L.D."/>
            <person name="Oliver K."/>
            <person name="Quail M.A."/>
            <person name="Rajandream M.A."/>
            <person name="Rutherford K.M."/>
            <person name="Rutter S."/>
            <person name="Seeger K."/>
            <person name="Simon S."/>
            <person name="Simmonds M."/>
            <person name="Skelton J."/>
            <person name="Squares R."/>
            <person name="Squares S."/>
            <person name="Stevens K."/>
            <person name="Taylor K."/>
            <person name="Whitehead S."/>
            <person name="Woodward J.R."/>
            <person name="Barrell B.G."/>
        </authorList>
    </citation>
    <scope>NUCLEOTIDE SEQUENCE [LARGE SCALE GENOMIC DNA]</scope>
    <source>
        <strain>TN</strain>
    </source>
</reference>
<sequence length="198" mass="21075">MSFPRVGVLALQGDTREHLTALREAGADSMPVRRRGELDEVDALVIPGGESTTISHLLLDCELLEPLRARLADGLPAYGACTGMILLASEILDAGVCGREALPLGAIDITVRRNAFGRQVDSFEGDIGFAGLVDPVRAVFIRAPWVERAGDGVQVLAQAAGHAVAVRQGSMLATAFHPEMTSDRRIHQLFVDIVNGIA</sequence>
<evidence type="ECO:0000255" key="1">
    <source>
        <dbReference type="HAMAP-Rule" id="MF_01615"/>
    </source>
</evidence>
<evidence type="ECO:0000305" key="2"/>
<keyword id="KW-0315">Glutamine amidotransferase</keyword>
<keyword id="KW-0378">Hydrolase</keyword>
<keyword id="KW-0456">Lyase</keyword>
<keyword id="KW-0663">Pyridoxal phosphate</keyword>
<keyword id="KW-1185">Reference proteome</keyword>
<comment type="function">
    <text evidence="1">Catalyzes the hydrolysis of glutamine to glutamate and ammonia as part of the biosynthesis of pyridoxal 5'-phosphate. The resulting ammonia molecule is channeled to the active site of PdxS.</text>
</comment>
<comment type="catalytic activity">
    <reaction evidence="1">
        <text>aldehydo-D-ribose 5-phosphate + D-glyceraldehyde 3-phosphate + L-glutamine = pyridoxal 5'-phosphate + L-glutamate + phosphate + 3 H2O + H(+)</text>
        <dbReference type="Rhea" id="RHEA:31507"/>
        <dbReference type="ChEBI" id="CHEBI:15377"/>
        <dbReference type="ChEBI" id="CHEBI:15378"/>
        <dbReference type="ChEBI" id="CHEBI:29985"/>
        <dbReference type="ChEBI" id="CHEBI:43474"/>
        <dbReference type="ChEBI" id="CHEBI:58273"/>
        <dbReference type="ChEBI" id="CHEBI:58359"/>
        <dbReference type="ChEBI" id="CHEBI:59776"/>
        <dbReference type="ChEBI" id="CHEBI:597326"/>
        <dbReference type="EC" id="4.3.3.6"/>
    </reaction>
</comment>
<comment type="catalytic activity">
    <reaction evidence="1">
        <text>L-glutamine + H2O = L-glutamate + NH4(+)</text>
        <dbReference type="Rhea" id="RHEA:15889"/>
        <dbReference type="ChEBI" id="CHEBI:15377"/>
        <dbReference type="ChEBI" id="CHEBI:28938"/>
        <dbReference type="ChEBI" id="CHEBI:29985"/>
        <dbReference type="ChEBI" id="CHEBI:58359"/>
        <dbReference type="EC" id="3.5.1.2"/>
    </reaction>
</comment>
<comment type="pathway">
    <text evidence="1">Cofactor biosynthesis; pyridoxal 5'-phosphate biosynthesis.</text>
</comment>
<comment type="subunit">
    <text evidence="1">In the presence of PdxS, forms a dodecamer of heterodimers. Only shows activity in the heterodimer.</text>
</comment>
<comment type="similarity">
    <text evidence="1">Belongs to the glutaminase PdxT/SNO family.</text>
</comment>
<comment type="sequence caution" evidence="2">
    <conflict type="erroneous initiation">
        <sequence resource="EMBL-CDS" id="AAA17085"/>
    </conflict>
</comment>
<comment type="sequence caution" evidence="2">
    <conflict type="erroneous initiation">
        <sequence resource="EMBL-CDS" id="CAC29982"/>
    </conflict>
</comment>
<protein>
    <recommendedName>
        <fullName evidence="1">Pyridoxal 5'-phosphate synthase subunit PdxT</fullName>
        <ecNumber evidence="1">4.3.3.6</ecNumber>
    </recommendedName>
    <alternativeName>
        <fullName evidence="1">Pdx2</fullName>
    </alternativeName>
    <alternativeName>
        <fullName evidence="1">Pyridoxal 5'-phosphate synthase glutaminase subunit</fullName>
        <ecNumber evidence="1">3.5.1.2</ecNumber>
    </alternativeName>
</protein>
<organism>
    <name type="scientific">Mycobacterium leprae (strain TN)</name>
    <dbReference type="NCBI Taxonomy" id="272631"/>
    <lineage>
        <taxon>Bacteria</taxon>
        <taxon>Bacillati</taxon>
        <taxon>Actinomycetota</taxon>
        <taxon>Actinomycetes</taxon>
        <taxon>Mycobacteriales</taxon>
        <taxon>Mycobacteriaceae</taxon>
        <taxon>Mycobacterium</taxon>
    </lineage>
</organism>